<gene>
    <name evidence="1" type="primary">dtd</name>
    <name type="ordered locus">XC_3807</name>
</gene>
<organism>
    <name type="scientific">Xanthomonas campestris pv. campestris (strain 8004)</name>
    <dbReference type="NCBI Taxonomy" id="314565"/>
    <lineage>
        <taxon>Bacteria</taxon>
        <taxon>Pseudomonadati</taxon>
        <taxon>Pseudomonadota</taxon>
        <taxon>Gammaproteobacteria</taxon>
        <taxon>Lysobacterales</taxon>
        <taxon>Lysobacteraceae</taxon>
        <taxon>Xanthomonas</taxon>
    </lineage>
</organism>
<name>DTD_XANC8</name>
<sequence>MLALIQRVTRASVAVDAQVVGQIGPGLLALIGIEPGDTAPQLRRLAERLLGYRVFSDEAGKMNRSLADTGGGLLLVSQFTLAADTKAGMRPSFSTAAPPEEAERAFNQLVAICREKHSGGVETGRFGAHMVVDLVNDGPVTFLLRP</sequence>
<protein>
    <recommendedName>
        <fullName evidence="1">D-aminoacyl-tRNA deacylase</fullName>
        <shortName evidence="1">DTD</shortName>
        <ecNumber evidence="1">3.1.1.96</ecNumber>
    </recommendedName>
    <alternativeName>
        <fullName evidence="1">Gly-tRNA(Ala) deacylase</fullName>
    </alternativeName>
</protein>
<comment type="function">
    <text evidence="1">An aminoacyl-tRNA editing enzyme that deacylates mischarged D-aminoacyl-tRNAs. Also deacylates mischarged glycyl-tRNA(Ala), protecting cells against glycine mischarging by AlaRS. Acts via tRNA-based rather than protein-based catalysis; rejects L-amino acids rather than detecting D-amino acids in the active site. By recycling D-aminoacyl-tRNA to D-amino acids and free tRNA molecules, this enzyme counteracts the toxicity associated with the formation of D-aminoacyl-tRNA entities in vivo and helps enforce protein L-homochirality.</text>
</comment>
<comment type="catalytic activity">
    <reaction evidence="1">
        <text>glycyl-tRNA(Ala) + H2O = tRNA(Ala) + glycine + H(+)</text>
        <dbReference type="Rhea" id="RHEA:53744"/>
        <dbReference type="Rhea" id="RHEA-COMP:9657"/>
        <dbReference type="Rhea" id="RHEA-COMP:13640"/>
        <dbReference type="ChEBI" id="CHEBI:15377"/>
        <dbReference type="ChEBI" id="CHEBI:15378"/>
        <dbReference type="ChEBI" id="CHEBI:57305"/>
        <dbReference type="ChEBI" id="CHEBI:78442"/>
        <dbReference type="ChEBI" id="CHEBI:78522"/>
        <dbReference type="EC" id="3.1.1.96"/>
    </reaction>
</comment>
<comment type="catalytic activity">
    <reaction evidence="1">
        <text>a D-aminoacyl-tRNA + H2O = a tRNA + a D-alpha-amino acid + H(+)</text>
        <dbReference type="Rhea" id="RHEA:13953"/>
        <dbReference type="Rhea" id="RHEA-COMP:10123"/>
        <dbReference type="Rhea" id="RHEA-COMP:10124"/>
        <dbReference type="ChEBI" id="CHEBI:15377"/>
        <dbReference type="ChEBI" id="CHEBI:15378"/>
        <dbReference type="ChEBI" id="CHEBI:59871"/>
        <dbReference type="ChEBI" id="CHEBI:78442"/>
        <dbReference type="ChEBI" id="CHEBI:79333"/>
        <dbReference type="EC" id="3.1.1.96"/>
    </reaction>
</comment>
<comment type="subunit">
    <text evidence="1">Homodimer.</text>
</comment>
<comment type="subcellular location">
    <subcellularLocation>
        <location evidence="1">Cytoplasm</location>
    </subcellularLocation>
</comment>
<comment type="domain">
    <text evidence="1">A Gly-cisPro motif from one monomer fits into the active site of the other monomer to allow specific chiral rejection of L-amino acids.</text>
</comment>
<comment type="similarity">
    <text evidence="1">Belongs to the DTD family.</text>
</comment>
<comment type="sequence caution" evidence="2">
    <conflict type="erroneous initiation">
        <sequence resource="EMBL-CDS" id="AAY50847"/>
    </conflict>
    <text>Extended N-terminus.</text>
</comment>
<keyword id="KW-0963">Cytoplasm</keyword>
<keyword id="KW-0378">Hydrolase</keyword>
<keyword id="KW-0694">RNA-binding</keyword>
<keyword id="KW-0820">tRNA-binding</keyword>
<accession>Q4UQ26</accession>
<proteinExistence type="inferred from homology"/>
<evidence type="ECO:0000255" key="1">
    <source>
        <dbReference type="HAMAP-Rule" id="MF_00518"/>
    </source>
</evidence>
<evidence type="ECO:0000305" key="2"/>
<dbReference type="EC" id="3.1.1.96" evidence="1"/>
<dbReference type="EMBL" id="CP000050">
    <property type="protein sequence ID" value="AAY50847.1"/>
    <property type="status" value="ALT_INIT"/>
    <property type="molecule type" value="Genomic_DNA"/>
</dbReference>
<dbReference type="RefSeq" id="WP_011038819.1">
    <property type="nucleotide sequence ID" value="NZ_CP155948.1"/>
</dbReference>
<dbReference type="SMR" id="Q4UQ26"/>
<dbReference type="KEGG" id="xcb:XC_3807"/>
<dbReference type="HOGENOM" id="CLU_076901_1_1_6"/>
<dbReference type="Proteomes" id="UP000000420">
    <property type="component" value="Chromosome"/>
</dbReference>
<dbReference type="GO" id="GO:0005737">
    <property type="term" value="C:cytoplasm"/>
    <property type="evidence" value="ECO:0007669"/>
    <property type="project" value="UniProtKB-SubCell"/>
</dbReference>
<dbReference type="GO" id="GO:0051500">
    <property type="term" value="F:D-tyrosyl-tRNA(Tyr) deacylase activity"/>
    <property type="evidence" value="ECO:0007669"/>
    <property type="project" value="TreeGrafter"/>
</dbReference>
<dbReference type="GO" id="GO:0106026">
    <property type="term" value="F:Gly-tRNA(Ala) deacylase activity"/>
    <property type="evidence" value="ECO:0007669"/>
    <property type="project" value="UniProtKB-UniRule"/>
</dbReference>
<dbReference type="GO" id="GO:0043908">
    <property type="term" value="F:Ser(Gly)-tRNA(Ala) hydrolase activity"/>
    <property type="evidence" value="ECO:0007669"/>
    <property type="project" value="UniProtKB-UniRule"/>
</dbReference>
<dbReference type="GO" id="GO:0000049">
    <property type="term" value="F:tRNA binding"/>
    <property type="evidence" value="ECO:0007669"/>
    <property type="project" value="UniProtKB-UniRule"/>
</dbReference>
<dbReference type="GO" id="GO:0019478">
    <property type="term" value="P:D-amino acid catabolic process"/>
    <property type="evidence" value="ECO:0007669"/>
    <property type="project" value="UniProtKB-UniRule"/>
</dbReference>
<dbReference type="CDD" id="cd00563">
    <property type="entry name" value="Dtyr_deacylase"/>
    <property type="match status" value="1"/>
</dbReference>
<dbReference type="FunFam" id="3.50.80.10:FF:000001">
    <property type="entry name" value="D-aminoacyl-tRNA deacylase"/>
    <property type="match status" value="1"/>
</dbReference>
<dbReference type="Gene3D" id="3.50.80.10">
    <property type="entry name" value="D-tyrosyl-tRNA(Tyr) deacylase"/>
    <property type="match status" value="1"/>
</dbReference>
<dbReference type="HAMAP" id="MF_00518">
    <property type="entry name" value="Deacylase_Dtd"/>
    <property type="match status" value="1"/>
</dbReference>
<dbReference type="InterPro" id="IPR003732">
    <property type="entry name" value="Daa-tRNA_deacyls_DTD"/>
</dbReference>
<dbReference type="InterPro" id="IPR023509">
    <property type="entry name" value="DTD-like_sf"/>
</dbReference>
<dbReference type="NCBIfam" id="TIGR00256">
    <property type="entry name" value="D-aminoacyl-tRNA deacylase"/>
    <property type="match status" value="1"/>
</dbReference>
<dbReference type="PANTHER" id="PTHR10472:SF5">
    <property type="entry name" value="D-AMINOACYL-TRNA DEACYLASE 1"/>
    <property type="match status" value="1"/>
</dbReference>
<dbReference type="PANTHER" id="PTHR10472">
    <property type="entry name" value="D-TYROSYL-TRNA TYR DEACYLASE"/>
    <property type="match status" value="1"/>
</dbReference>
<dbReference type="Pfam" id="PF02580">
    <property type="entry name" value="Tyr_Deacylase"/>
    <property type="match status" value="1"/>
</dbReference>
<dbReference type="SUPFAM" id="SSF69500">
    <property type="entry name" value="DTD-like"/>
    <property type="match status" value="1"/>
</dbReference>
<reference key="1">
    <citation type="journal article" date="2005" name="Genome Res.">
        <title>Comparative and functional genomic analyses of the pathogenicity of phytopathogen Xanthomonas campestris pv. campestris.</title>
        <authorList>
            <person name="Qian W."/>
            <person name="Jia Y."/>
            <person name="Ren S.-X."/>
            <person name="He Y.-Q."/>
            <person name="Feng J.-X."/>
            <person name="Lu L.-F."/>
            <person name="Sun Q."/>
            <person name="Ying G."/>
            <person name="Tang D.-J."/>
            <person name="Tang H."/>
            <person name="Wu W."/>
            <person name="Hao P."/>
            <person name="Wang L."/>
            <person name="Jiang B.-L."/>
            <person name="Zeng S."/>
            <person name="Gu W.-Y."/>
            <person name="Lu G."/>
            <person name="Rong L."/>
            <person name="Tian Y."/>
            <person name="Yao Z."/>
            <person name="Fu G."/>
            <person name="Chen B."/>
            <person name="Fang R."/>
            <person name="Qiang B."/>
            <person name="Chen Z."/>
            <person name="Zhao G.-P."/>
            <person name="Tang J.-L."/>
            <person name="He C."/>
        </authorList>
    </citation>
    <scope>NUCLEOTIDE SEQUENCE [LARGE SCALE GENOMIC DNA]</scope>
    <source>
        <strain>8004</strain>
    </source>
</reference>
<feature type="chain" id="PRO_0000259328" description="D-aminoacyl-tRNA deacylase">
    <location>
        <begin position="1"/>
        <end position="146"/>
    </location>
</feature>
<feature type="short sequence motif" description="Gly-cisPro motif, important for rejection of L-amino acids" evidence="1">
    <location>
        <begin position="138"/>
        <end position="139"/>
    </location>
</feature>